<evidence type="ECO:0000255" key="1"/>
<evidence type="ECO:0000305" key="2"/>
<accession>P80260</accession>
<sequence length="56" mass="6261">AEIDRPVSLSGLTEGEAREFHGVFMTSFMVFIAVAIVAHILAWMWRPWIPGPEGYA</sequence>
<comment type="function">
    <text>Antenna complexes are light-harvesting systems, which transfer the excitation energy to the reaction centers.</text>
</comment>
<comment type="subunit">
    <text>The core complex is formed by different alpha and beta chains, binding bacteriochlorophyll molecules, and arranged most probably in tetrameric structures disposed around the reaction center. The non-pigmented gamma chains may constitute additional components.</text>
</comment>
<comment type="subcellular location">
    <subcellularLocation>
        <location>Cell inner membrane</location>
        <topology>Single-pass type II membrane protein</topology>
    </subcellularLocation>
</comment>
<comment type="similarity">
    <text evidence="2">Belongs to the antenna complex beta subunit family.</text>
</comment>
<dbReference type="SMR" id="P80260"/>
<dbReference type="GO" id="GO:0005886">
    <property type="term" value="C:plasma membrane"/>
    <property type="evidence" value="ECO:0007669"/>
    <property type="project" value="UniProtKB-SubCell"/>
</dbReference>
<dbReference type="GO" id="GO:0030077">
    <property type="term" value="C:plasma membrane light-harvesting complex"/>
    <property type="evidence" value="ECO:0007669"/>
    <property type="project" value="InterPro"/>
</dbReference>
<dbReference type="GO" id="GO:0042314">
    <property type="term" value="F:bacteriochlorophyll binding"/>
    <property type="evidence" value="ECO:0007669"/>
    <property type="project" value="UniProtKB-KW"/>
</dbReference>
<dbReference type="GO" id="GO:0045156">
    <property type="term" value="F:electron transporter, transferring electrons within the cyclic electron transport pathway of photosynthesis activity"/>
    <property type="evidence" value="ECO:0007669"/>
    <property type="project" value="InterPro"/>
</dbReference>
<dbReference type="GO" id="GO:0046872">
    <property type="term" value="F:metal ion binding"/>
    <property type="evidence" value="ECO:0007669"/>
    <property type="project" value="UniProtKB-KW"/>
</dbReference>
<dbReference type="GO" id="GO:0019684">
    <property type="term" value="P:photosynthesis, light reaction"/>
    <property type="evidence" value="ECO:0007669"/>
    <property type="project" value="InterPro"/>
</dbReference>
<dbReference type="Gene3D" id="1.20.5.250">
    <property type="match status" value="1"/>
</dbReference>
<dbReference type="InterPro" id="IPR000066">
    <property type="entry name" value="Antenna_a/b"/>
</dbReference>
<dbReference type="InterPro" id="IPR023623">
    <property type="entry name" value="Antenna_beta_CS"/>
</dbReference>
<dbReference type="InterPro" id="IPR023624">
    <property type="entry name" value="Antenna_beta_dom_sf"/>
</dbReference>
<dbReference type="InterPro" id="IPR002362">
    <property type="entry name" value="LHB-1/5"/>
</dbReference>
<dbReference type="InterPro" id="IPR035889">
    <property type="entry name" value="Light-harvesting_complex"/>
</dbReference>
<dbReference type="NCBIfam" id="NF040862">
    <property type="entry name" value="pufB_517_ASD"/>
    <property type="match status" value="1"/>
</dbReference>
<dbReference type="Pfam" id="PF00556">
    <property type="entry name" value="LHC"/>
    <property type="match status" value="1"/>
</dbReference>
<dbReference type="PIRSF" id="PIRSF002900">
    <property type="entry name" value="Antenna_beta"/>
    <property type="match status" value="1"/>
</dbReference>
<dbReference type="PRINTS" id="PR00674">
    <property type="entry name" value="LIGHTHARVSTB"/>
</dbReference>
<dbReference type="SUPFAM" id="SSF56918">
    <property type="entry name" value="Light-harvesting complex subunits"/>
    <property type="match status" value="1"/>
</dbReference>
<dbReference type="PROSITE" id="PS00969">
    <property type="entry name" value="ANTENNA_COMP_BETA"/>
    <property type="match status" value="1"/>
</dbReference>
<proteinExistence type="evidence at protein level"/>
<protein>
    <recommendedName>
        <fullName>Light-harvesting protein B-880 beta chain</fullName>
    </recommendedName>
    <alternativeName>
        <fullName>Antenna pigment protein beta chain</fullName>
    </alternativeName>
</protein>
<feature type="chain" id="PRO_0000099826" description="Light-harvesting protein B-880 beta chain">
    <location>
        <begin position="1"/>
        <end position="56"/>
    </location>
</feature>
<feature type="topological domain" description="Cytoplasmic" evidence="1">
    <location>
        <begin position="1"/>
        <end position="22"/>
    </location>
</feature>
<feature type="transmembrane region" description="Helical" evidence="1">
    <location>
        <begin position="23"/>
        <end position="45"/>
    </location>
</feature>
<feature type="topological domain" description="Periplasmic" evidence="1">
    <location>
        <begin position="46"/>
        <end position="56"/>
    </location>
</feature>
<feature type="binding site" description="axial binding residue" evidence="1">
    <location>
        <position position="21"/>
    </location>
    <ligand>
        <name>a bacteriochlorophyll</name>
        <dbReference type="ChEBI" id="CHEBI:38201"/>
    </ligand>
    <ligandPart>
        <name>Mg</name>
        <dbReference type="ChEBI" id="CHEBI:25107"/>
    </ligandPart>
</feature>
<feature type="binding site" description="axial binding residue" evidence="1">
    <location>
        <position position="39"/>
    </location>
    <ligand>
        <name>a bacteriochlorophyll</name>
        <dbReference type="ChEBI" id="CHEBI:38201"/>
    </ligand>
    <ligandPart>
        <name>Mg</name>
        <dbReference type="ChEBI" id="CHEBI:25107"/>
    </ligandPart>
</feature>
<keyword id="KW-0042">Antenna complex</keyword>
<keyword id="KW-0076">Bacteriochlorophyll</keyword>
<keyword id="KW-0997">Cell inner membrane</keyword>
<keyword id="KW-1003">Cell membrane</keyword>
<keyword id="KW-0148">Chlorophyll</keyword>
<keyword id="KW-0157">Chromophore</keyword>
<keyword id="KW-0903">Direct protein sequencing</keyword>
<keyword id="KW-0437">Light-harvesting polypeptide</keyword>
<keyword id="KW-0460">Magnesium</keyword>
<keyword id="KW-0472">Membrane</keyword>
<keyword id="KW-0479">Metal-binding</keyword>
<keyword id="KW-0812">Transmembrane</keyword>
<keyword id="KW-1133">Transmembrane helix</keyword>
<name>LHB_AFIMA</name>
<organism>
    <name type="scientific">Afifella marina</name>
    <name type="common">Rhodobium marinum</name>
    <name type="synonym">Rhodopseudomonas marina</name>
    <dbReference type="NCBI Taxonomy" id="1080"/>
    <lineage>
        <taxon>Bacteria</taxon>
        <taxon>Pseudomonadati</taxon>
        <taxon>Pseudomonadota</taxon>
        <taxon>Alphaproteobacteria</taxon>
        <taxon>Hyphomicrobiales</taxon>
        <taxon>Afifellaceae</taxon>
        <taxon>Afifella</taxon>
    </lineage>
</organism>
<reference key="1">
    <citation type="journal article" date="1989" name="Z. Naturforsch. C">
        <title>The primary structures of the core antenna polypeptides from Rhodopseudomonas marina.</title>
        <authorList>
            <person name="Brunisholz R.A."/>
            <person name="Bissig I."/>
            <person name="Wagner-Huber R."/>
            <person name="Frank G."/>
            <person name="Suter F."/>
            <person name="Niederer E."/>
            <person name="Zuber H."/>
        </authorList>
    </citation>
    <scope>PROTEIN SEQUENCE</scope>
    <source>
        <strain>ATCC 35675 / DSM 2698 / NBRC 100434 / NCIMB 2201 / BN 126</strain>
    </source>
</reference>